<accession>Q8PNB5</accession>
<sequence>MGQSVVVLGAQWGDEGKGKIVDLLTEEIGAVVRFQGGHNAGHTLVINGKKTVLHLIPSGILRDDALCLIGNGVVISPAALIKEISELEDAGVEVRSRLKISPAAPLIMPYHIALDQAREKAAGGKAIGTTGRGIGPAYEDKVARRGIRIADLHYPPQLEELLRTALDYHNFVLTKYLGVEAVDFQKTYDEALAFGEYVQPMKSDVAGILHDLRKQGKRVLFEGAQGALLDIDHGTYPYVTSSNTTVGGALAGTGVGADAIDYVLGIAKAYATRVGGGPFPTELDDEVGQGIRDRGAEYGASTGRPRRCGWMDIVALKRAVAINGISGLCITKLDVLDGMEKLKICIAYEYHGKRTEYAPLDAQGWEECTPVYLEFPGWSENTHGITVWDDLPPAARAYLRALEELAGCPISIVSTGPDRDHTMVLQDPFA</sequence>
<reference key="1">
    <citation type="journal article" date="2002" name="Nature">
        <title>Comparison of the genomes of two Xanthomonas pathogens with differing host specificities.</title>
        <authorList>
            <person name="da Silva A.C.R."/>
            <person name="Ferro J.A."/>
            <person name="Reinach F.C."/>
            <person name="Farah C.S."/>
            <person name="Furlan L.R."/>
            <person name="Quaggio R.B."/>
            <person name="Monteiro-Vitorello C.B."/>
            <person name="Van Sluys M.A."/>
            <person name="Almeida N.F. Jr."/>
            <person name="Alves L.M.C."/>
            <person name="do Amaral A.M."/>
            <person name="Bertolini M.C."/>
            <person name="Camargo L.E.A."/>
            <person name="Camarotte G."/>
            <person name="Cannavan F."/>
            <person name="Cardozo J."/>
            <person name="Chambergo F."/>
            <person name="Ciapina L.P."/>
            <person name="Cicarelli R.M.B."/>
            <person name="Coutinho L.L."/>
            <person name="Cursino-Santos J.R."/>
            <person name="El-Dorry H."/>
            <person name="Faria J.B."/>
            <person name="Ferreira A.J.S."/>
            <person name="Ferreira R.C.C."/>
            <person name="Ferro M.I.T."/>
            <person name="Formighieri E.F."/>
            <person name="Franco M.C."/>
            <person name="Greggio C.C."/>
            <person name="Gruber A."/>
            <person name="Katsuyama A.M."/>
            <person name="Kishi L.T."/>
            <person name="Leite R.P."/>
            <person name="Lemos E.G.M."/>
            <person name="Lemos M.V.F."/>
            <person name="Locali E.C."/>
            <person name="Machado M.A."/>
            <person name="Madeira A.M.B.N."/>
            <person name="Martinez-Rossi N.M."/>
            <person name="Martins E.C."/>
            <person name="Meidanis J."/>
            <person name="Menck C.F.M."/>
            <person name="Miyaki C.Y."/>
            <person name="Moon D.H."/>
            <person name="Moreira L.M."/>
            <person name="Novo M.T.M."/>
            <person name="Okura V.K."/>
            <person name="Oliveira M.C."/>
            <person name="Oliveira V.R."/>
            <person name="Pereira H.A."/>
            <person name="Rossi A."/>
            <person name="Sena J.A.D."/>
            <person name="Silva C."/>
            <person name="de Souza R.F."/>
            <person name="Spinola L.A.F."/>
            <person name="Takita M.A."/>
            <person name="Tamura R.E."/>
            <person name="Teixeira E.C."/>
            <person name="Tezza R.I.D."/>
            <person name="Trindade dos Santos M."/>
            <person name="Truffi D."/>
            <person name="Tsai S.M."/>
            <person name="White F.F."/>
            <person name="Setubal J.C."/>
            <person name="Kitajima J.P."/>
        </authorList>
    </citation>
    <scope>NUCLEOTIDE SEQUENCE [LARGE SCALE GENOMIC DNA]</scope>
    <source>
        <strain>306</strain>
    </source>
</reference>
<comment type="function">
    <text evidence="1">Plays an important role in the de novo pathway of purine nucleotide biosynthesis. Catalyzes the first committed step in the biosynthesis of AMP from IMP.</text>
</comment>
<comment type="catalytic activity">
    <reaction evidence="1">
        <text>IMP + L-aspartate + GTP = N(6)-(1,2-dicarboxyethyl)-AMP + GDP + phosphate + 2 H(+)</text>
        <dbReference type="Rhea" id="RHEA:15753"/>
        <dbReference type="ChEBI" id="CHEBI:15378"/>
        <dbReference type="ChEBI" id="CHEBI:29991"/>
        <dbReference type="ChEBI" id="CHEBI:37565"/>
        <dbReference type="ChEBI" id="CHEBI:43474"/>
        <dbReference type="ChEBI" id="CHEBI:57567"/>
        <dbReference type="ChEBI" id="CHEBI:58053"/>
        <dbReference type="ChEBI" id="CHEBI:58189"/>
        <dbReference type="EC" id="6.3.4.4"/>
    </reaction>
</comment>
<comment type="cofactor">
    <cofactor evidence="1">
        <name>Mg(2+)</name>
        <dbReference type="ChEBI" id="CHEBI:18420"/>
    </cofactor>
    <text evidence="1">Binds 1 Mg(2+) ion per subunit.</text>
</comment>
<comment type="pathway">
    <text evidence="1">Purine metabolism; AMP biosynthesis via de novo pathway; AMP from IMP: step 1/2.</text>
</comment>
<comment type="subunit">
    <text evidence="1">Homodimer.</text>
</comment>
<comment type="subcellular location">
    <subcellularLocation>
        <location evidence="1">Cytoplasm</location>
    </subcellularLocation>
</comment>
<comment type="similarity">
    <text evidence="1">Belongs to the adenylosuccinate synthetase family.</text>
</comment>
<protein>
    <recommendedName>
        <fullName evidence="1">Adenylosuccinate synthetase</fullName>
        <shortName evidence="1">AMPSase</shortName>
        <shortName evidence="1">AdSS</shortName>
        <ecNumber evidence="1">6.3.4.4</ecNumber>
    </recommendedName>
    <alternativeName>
        <fullName evidence="1">IMP--aspartate ligase</fullName>
    </alternativeName>
</protein>
<gene>
    <name evidence="1" type="primary">purA</name>
    <name type="ordered locus">XAC1158</name>
</gene>
<name>PURA_XANAC</name>
<feature type="chain" id="PRO_0000095261" description="Adenylosuccinate synthetase">
    <location>
        <begin position="1"/>
        <end position="430"/>
    </location>
</feature>
<feature type="active site" description="Proton acceptor" evidence="1">
    <location>
        <position position="14"/>
    </location>
</feature>
<feature type="active site" description="Proton donor" evidence="1">
    <location>
        <position position="42"/>
    </location>
</feature>
<feature type="binding site" evidence="1">
    <location>
        <begin position="13"/>
        <end position="19"/>
    </location>
    <ligand>
        <name>GTP</name>
        <dbReference type="ChEBI" id="CHEBI:37565"/>
    </ligand>
</feature>
<feature type="binding site" description="in other chain" evidence="1">
    <location>
        <begin position="14"/>
        <end position="17"/>
    </location>
    <ligand>
        <name>IMP</name>
        <dbReference type="ChEBI" id="CHEBI:58053"/>
        <note>ligand shared between dimeric partners</note>
    </ligand>
</feature>
<feature type="binding site" evidence="1">
    <location>
        <position position="14"/>
    </location>
    <ligand>
        <name>Mg(2+)</name>
        <dbReference type="ChEBI" id="CHEBI:18420"/>
    </ligand>
</feature>
<feature type="binding site" description="in other chain" evidence="1">
    <location>
        <begin position="39"/>
        <end position="42"/>
    </location>
    <ligand>
        <name>IMP</name>
        <dbReference type="ChEBI" id="CHEBI:58053"/>
        <note>ligand shared between dimeric partners</note>
    </ligand>
</feature>
<feature type="binding site" evidence="1">
    <location>
        <begin position="41"/>
        <end position="43"/>
    </location>
    <ligand>
        <name>GTP</name>
        <dbReference type="ChEBI" id="CHEBI:37565"/>
    </ligand>
</feature>
<feature type="binding site" evidence="1">
    <location>
        <position position="41"/>
    </location>
    <ligand>
        <name>Mg(2+)</name>
        <dbReference type="ChEBI" id="CHEBI:18420"/>
    </ligand>
</feature>
<feature type="binding site" description="in other chain" evidence="1">
    <location>
        <position position="130"/>
    </location>
    <ligand>
        <name>IMP</name>
        <dbReference type="ChEBI" id="CHEBI:58053"/>
        <note>ligand shared between dimeric partners</note>
    </ligand>
</feature>
<feature type="binding site" evidence="1">
    <location>
        <position position="144"/>
    </location>
    <ligand>
        <name>IMP</name>
        <dbReference type="ChEBI" id="CHEBI:58053"/>
        <note>ligand shared between dimeric partners</note>
    </ligand>
</feature>
<feature type="binding site" description="in other chain" evidence="1">
    <location>
        <position position="225"/>
    </location>
    <ligand>
        <name>IMP</name>
        <dbReference type="ChEBI" id="CHEBI:58053"/>
        <note>ligand shared between dimeric partners</note>
    </ligand>
</feature>
<feature type="binding site" description="in other chain" evidence="1">
    <location>
        <position position="240"/>
    </location>
    <ligand>
        <name>IMP</name>
        <dbReference type="ChEBI" id="CHEBI:58053"/>
        <note>ligand shared between dimeric partners</note>
    </ligand>
</feature>
<feature type="binding site" evidence="1">
    <location>
        <begin position="300"/>
        <end position="306"/>
    </location>
    <ligand>
        <name>substrate</name>
    </ligand>
</feature>
<feature type="binding site" description="in other chain" evidence="1">
    <location>
        <position position="304"/>
    </location>
    <ligand>
        <name>IMP</name>
        <dbReference type="ChEBI" id="CHEBI:58053"/>
        <note>ligand shared between dimeric partners</note>
    </ligand>
</feature>
<feature type="binding site" evidence="1">
    <location>
        <position position="306"/>
    </location>
    <ligand>
        <name>GTP</name>
        <dbReference type="ChEBI" id="CHEBI:37565"/>
    </ligand>
</feature>
<feature type="binding site" evidence="1">
    <location>
        <begin position="332"/>
        <end position="334"/>
    </location>
    <ligand>
        <name>GTP</name>
        <dbReference type="ChEBI" id="CHEBI:37565"/>
    </ligand>
</feature>
<feature type="binding site" evidence="1">
    <location>
        <begin position="414"/>
        <end position="416"/>
    </location>
    <ligand>
        <name>GTP</name>
        <dbReference type="ChEBI" id="CHEBI:37565"/>
    </ligand>
</feature>
<proteinExistence type="inferred from homology"/>
<dbReference type="EC" id="6.3.4.4" evidence="1"/>
<dbReference type="EMBL" id="AE008923">
    <property type="protein sequence ID" value="AAM36030.1"/>
    <property type="molecule type" value="Genomic_DNA"/>
</dbReference>
<dbReference type="RefSeq" id="WP_005913957.1">
    <property type="nucleotide sequence ID" value="NC_003919.1"/>
</dbReference>
<dbReference type="SMR" id="Q8PNB5"/>
<dbReference type="KEGG" id="xac:XAC1158"/>
<dbReference type="eggNOG" id="COG0104">
    <property type="taxonomic scope" value="Bacteria"/>
</dbReference>
<dbReference type="HOGENOM" id="CLU_029848_0_0_6"/>
<dbReference type="UniPathway" id="UPA00075">
    <property type="reaction ID" value="UER00335"/>
</dbReference>
<dbReference type="Proteomes" id="UP000000576">
    <property type="component" value="Chromosome"/>
</dbReference>
<dbReference type="GO" id="GO:0005737">
    <property type="term" value="C:cytoplasm"/>
    <property type="evidence" value="ECO:0007669"/>
    <property type="project" value="UniProtKB-SubCell"/>
</dbReference>
<dbReference type="GO" id="GO:0004019">
    <property type="term" value="F:adenylosuccinate synthase activity"/>
    <property type="evidence" value="ECO:0007669"/>
    <property type="project" value="UniProtKB-UniRule"/>
</dbReference>
<dbReference type="GO" id="GO:0005525">
    <property type="term" value="F:GTP binding"/>
    <property type="evidence" value="ECO:0007669"/>
    <property type="project" value="UniProtKB-UniRule"/>
</dbReference>
<dbReference type="GO" id="GO:0000287">
    <property type="term" value="F:magnesium ion binding"/>
    <property type="evidence" value="ECO:0007669"/>
    <property type="project" value="UniProtKB-UniRule"/>
</dbReference>
<dbReference type="GO" id="GO:0044208">
    <property type="term" value="P:'de novo' AMP biosynthetic process"/>
    <property type="evidence" value="ECO:0007669"/>
    <property type="project" value="UniProtKB-UniRule"/>
</dbReference>
<dbReference type="GO" id="GO:0046040">
    <property type="term" value="P:IMP metabolic process"/>
    <property type="evidence" value="ECO:0007669"/>
    <property type="project" value="TreeGrafter"/>
</dbReference>
<dbReference type="CDD" id="cd03108">
    <property type="entry name" value="AdSS"/>
    <property type="match status" value="1"/>
</dbReference>
<dbReference type="FunFam" id="1.10.300.10:FF:000001">
    <property type="entry name" value="Adenylosuccinate synthetase"/>
    <property type="match status" value="1"/>
</dbReference>
<dbReference type="FunFam" id="3.90.170.10:FF:000001">
    <property type="entry name" value="Adenylosuccinate synthetase"/>
    <property type="match status" value="1"/>
</dbReference>
<dbReference type="Gene3D" id="3.40.440.10">
    <property type="entry name" value="Adenylosuccinate Synthetase, subunit A, domain 1"/>
    <property type="match status" value="1"/>
</dbReference>
<dbReference type="Gene3D" id="1.10.300.10">
    <property type="entry name" value="Adenylosuccinate Synthetase, subunit A, domain 2"/>
    <property type="match status" value="1"/>
</dbReference>
<dbReference type="Gene3D" id="3.90.170.10">
    <property type="entry name" value="Adenylosuccinate Synthetase, subunit A, domain 3"/>
    <property type="match status" value="1"/>
</dbReference>
<dbReference type="HAMAP" id="MF_00011">
    <property type="entry name" value="Adenylosucc_synth"/>
    <property type="match status" value="1"/>
</dbReference>
<dbReference type="InterPro" id="IPR018220">
    <property type="entry name" value="Adenylosuccin_syn_GTP-bd"/>
</dbReference>
<dbReference type="InterPro" id="IPR033128">
    <property type="entry name" value="Adenylosuccin_syn_Lys_AS"/>
</dbReference>
<dbReference type="InterPro" id="IPR042109">
    <property type="entry name" value="Adenylosuccinate_synth_dom1"/>
</dbReference>
<dbReference type="InterPro" id="IPR042110">
    <property type="entry name" value="Adenylosuccinate_synth_dom2"/>
</dbReference>
<dbReference type="InterPro" id="IPR042111">
    <property type="entry name" value="Adenylosuccinate_synth_dom3"/>
</dbReference>
<dbReference type="InterPro" id="IPR001114">
    <property type="entry name" value="Adenylosuccinate_synthetase"/>
</dbReference>
<dbReference type="InterPro" id="IPR027417">
    <property type="entry name" value="P-loop_NTPase"/>
</dbReference>
<dbReference type="NCBIfam" id="NF002223">
    <property type="entry name" value="PRK01117.1"/>
    <property type="match status" value="1"/>
</dbReference>
<dbReference type="NCBIfam" id="TIGR00184">
    <property type="entry name" value="purA"/>
    <property type="match status" value="1"/>
</dbReference>
<dbReference type="PANTHER" id="PTHR11846">
    <property type="entry name" value="ADENYLOSUCCINATE SYNTHETASE"/>
    <property type="match status" value="1"/>
</dbReference>
<dbReference type="PANTHER" id="PTHR11846:SF0">
    <property type="entry name" value="ADENYLOSUCCINATE SYNTHETASE"/>
    <property type="match status" value="1"/>
</dbReference>
<dbReference type="Pfam" id="PF00709">
    <property type="entry name" value="Adenylsucc_synt"/>
    <property type="match status" value="1"/>
</dbReference>
<dbReference type="SMART" id="SM00788">
    <property type="entry name" value="Adenylsucc_synt"/>
    <property type="match status" value="1"/>
</dbReference>
<dbReference type="SUPFAM" id="SSF52540">
    <property type="entry name" value="P-loop containing nucleoside triphosphate hydrolases"/>
    <property type="match status" value="1"/>
</dbReference>
<dbReference type="PROSITE" id="PS01266">
    <property type="entry name" value="ADENYLOSUCCIN_SYN_1"/>
    <property type="match status" value="1"/>
</dbReference>
<dbReference type="PROSITE" id="PS00513">
    <property type="entry name" value="ADENYLOSUCCIN_SYN_2"/>
    <property type="match status" value="1"/>
</dbReference>
<organism>
    <name type="scientific">Xanthomonas axonopodis pv. citri (strain 306)</name>
    <dbReference type="NCBI Taxonomy" id="190486"/>
    <lineage>
        <taxon>Bacteria</taxon>
        <taxon>Pseudomonadati</taxon>
        <taxon>Pseudomonadota</taxon>
        <taxon>Gammaproteobacteria</taxon>
        <taxon>Lysobacterales</taxon>
        <taxon>Lysobacteraceae</taxon>
        <taxon>Xanthomonas</taxon>
    </lineage>
</organism>
<keyword id="KW-0963">Cytoplasm</keyword>
<keyword id="KW-0342">GTP-binding</keyword>
<keyword id="KW-0436">Ligase</keyword>
<keyword id="KW-0460">Magnesium</keyword>
<keyword id="KW-0479">Metal-binding</keyword>
<keyword id="KW-0547">Nucleotide-binding</keyword>
<keyword id="KW-0658">Purine biosynthesis</keyword>
<evidence type="ECO:0000255" key="1">
    <source>
        <dbReference type="HAMAP-Rule" id="MF_00011"/>
    </source>
</evidence>